<proteinExistence type="evidence at transcript level"/>
<organism evidence="9">
    <name type="scientific">Plasmodium berghei (strain Anka)</name>
    <dbReference type="NCBI Taxonomy" id="5823"/>
    <lineage>
        <taxon>Eukaryota</taxon>
        <taxon>Sar</taxon>
        <taxon>Alveolata</taxon>
        <taxon>Apicomplexa</taxon>
        <taxon>Aconoidasida</taxon>
        <taxon>Haemosporida</taxon>
        <taxon>Plasmodiidae</taxon>
        <taxon>Plasmodium</taxon>
        <taxon>Plasmodium (Vinckeia)</taxon>
    </lineage>
</organism>
<sequence length="509" mass="59155">MPRHCCCFVFHFLLYMLLINIVKNNIITAFSHRHQALRERKNIFSNSPINYIYYLGANKHIYSKFSSVCEQKKLAHKKIAIKKWGIERNEKKKFTISLNNYNKIQQSKFMSKMVKENKASTKNENKCSINNTQDIRNFMNLKKEEKDEECDEKTKQDNNKENIKNETIVQKKKIDKNNKTKEKIKTKSETNKNTNITYPSIPKSIEKRWADYKKIIEYAKSTNVYLGAHISASGGVQNAPINSFNVSGLAFALFLKNQRKWESPPLTEENIKQFNENCKKYNFDKNLILPHGSYLINLANPDKEKREKSYLSFVDDIKRCEQLNIKLYNFHPGSTVGMCSTEQGIKNISDCINRAHKETSNVIIVLENSAGQKNSIGSKFEHLRDIISQIDDKERIGVCLDTCHTFAAGYDIKSYEKFEEVMNNFHNIVDSKYLKAVHLNDSKSDLGSGLDRHENIGKGKLTLDTFKYIMTSKYFKNIPIVLETPDITNDESVYKYEIEYLYKMCAKEQ</sequence>
<gene>
    <name evidence="6" type="primary">APN1</name>
    <name evidence="8" type="ORF">PBANKA_1347400</name>
</gene>
<feature type="signal peptide" evidence="2">
    <location>
        <begin position="1"/>
        <end position="24"/>
    </location>
</feature>
<feature type="chain" id="PRO_0000456881" description="Apurinic-apyrimidinic endonuclease 1" evidence="2">
    <location>
        <begin position="25"/>
        <end position="509"/>
    </location>
</feature>
<feature type="region of interest" description="Disordered" evidence="4">
    <location>
        <begin position="144"/>
        <end position="188"/>
    </location>
</feature>
<feature type="compositionally biased region" description="Basic and acidic residues" evidence="4">
    <location>
        <begin position="152"/>
        <end position="164"/>
    </location>
</feature>
<feature type="compositionally biased region" description="Basic and acidic residues" evidence="4">
    <location>
        <begin position="175"/>
        <end position="188"/>
    </location>
</feature>
<feature type="binding site" evidence="3">
    <location>
        <position position="291"/>
    </location>
    <ligand>
        <name>Zn(2+)</name>
        <dbReference type="ChEBI" id="CHEBI:29105"/>
        <label>1</label>
    </ligand>
</feature>
<feature type="binding site" evidence="3">
    <location>
        <position position="331"/>
    </location>
    <ligand>
        <name>Zn(2+)</name>
        <dbReference type="ChEBI" id="CHEBI:29105"/>
        <label>1</label>
    </ligand>
</feature>
<feature type="binding site" evidence="3">
    <location>
        <position position="367"/>
    </location>
    <ligand>
        <name>Zn(2+)</name>
        <dbReference type="ChEBI" id="CHEBI:29105"/>
        <label>1</label>
    </ligand>
</feature>
<feature type="binding site" evidence="3">
    <location>
        <position position="367"/>
    </location>
    <ligand>
        <name>Zn(2+)</name>
        <dbReference type="ChEBI" id="CHEBI:29105"/>
        <label>2</label>
    </ligand>
</feature>
<feature type="binding site" evidence="3">
    <location>
        <position position="401"/>
    </location>
    <ligand>
        <name>Zn(2+)</name>
        <dbReference type="ChEBI" id="CHEBI:29105"/>
        <label>2</label>
    </ligand>
</feature>
<feature type="binding site" evidence="1">
    <location>
        <position position="404"/>
    </location>
    <ligand>
        <name>Mn(2+)</name>
        <dbReference type="ChEBI" id="CHEBI:29035"/>
    </ligand>
</feature>
<feature type="binding site" evidence="3">
    <location>
        <position position="404"/>
    </location>
    <ligand>
        <name>Zn(2+)</name>
        <dbReference type="ChEBI" id="CHEBI:29105"/>
        <label>3</label>
    </ligand>
</feature>
<feature type="binding site" evidence="3">
    <location>
        <position position="438"/>
    </location>
    <ligand>
        <name>Zn(2+)</name>
        <dbReference type="ChEBI" id="CHEBI:29105"/>
        <label>2</label>
    </ligand>
</feature>
<feature type="binding site" evidence="1">
    <location>
        <position position="451"/>
    </location>
    <ligand>
        <name>Mn(2+)</name>
        <dbReference type="ChEBI" id="CHEBI:29035"/>
    </ligand>
</feature>
<feature type="binding site" evidence="3">
    <location>
        <position position="451"/>
    </location>
    <ligand>
        <name>Zn(2+)</name>
        <dbReference type="ChEBI" id="CHEBI:29105"/>
        <label>3</label>
    </ligand>
</feature>
<feature type="binding site" evidence="1">
    <location>
        <position position="453"/>
    </location>
    <ligand>
        <name>Mn(2+)</name>
        <dbReference type="ChEBI" id="CHEBI:29035"/>
    </ligand>
</feature>
<feature type="binding site" evidence="3">
    <location>
        <position position="453"/>
    </location>
    <ligand>
        <name>Zn(2+)</name>
        <dbReference type="ChEBI" id="CHEBI:29105"/>
        <label>3</label>
    </ligand>
</feature>
<feature type="binding site" evidence="3">
    <location>
        <position position="483"/>
    </location>
    <ligand>
        <name>Zn(2+)</name>
        <dbReference type="ChEBI" id="CHEBI:29105"/>
        <label>2</label>
    </ligand>
</feature>
<evidence type="ECO:0000250" key="1">
    <source>
        <dbReference type="UniProtKB" id="Q8IE02"/>
    </source>
</evidence>
<evidence type="ECO:0000255" key="2"/>
<evidence type="ECO:0000255" key="3">
    <source>
        <dbReference type="PROSITE-ProRule" id="PRU00763"/>
    </source>
</evidence>
<evidence type="ECO:0000256" key="4">
    <source>
        <dbReference type="SAM" id="MobiDB-lite"/>
    </source>
</evidence>
<evidence type="ECO:0000269" key="5">
    <source>
    </source>
</evidence>
<evidence type="ECO:0000303" key="6">
    <source>
    </source>
</evidence>
<evidence type="ECO:0000305" key="7"/>
<evidence type="ECO:0000312" key="8">
    <source>
        <dbReference type="EMBL" id="VUC57861.1"/>
    </source>
</evidence>
<evidence type="ECO:0000312" key="9">
    <source>
        <dbReference type="Proteomes" id="UP000074855"/>
    </source>
</evidence>
<comment type="function">
    <text evidence="1">Plays a role in mitochondrial DNA base excision repair (BER) pathway induced by oxidative stress. Has apurinic/apyrimidinic (AP) endonuclease activity towards double-stranded DNA (dsDNA) with a preference for C as opposite base. Has 3'-phosphatase activity; removes 3'-phosphate from blunt-end, recessed, and gapped DNA templates and thus, removes 3'-blocks for DNA polymerase activity during BER. Lacks 3'-5' exonuclease activity and does not cleave damaged bases by nucleotide incision repair (NIR).</text>
</comment>
<comment type="cofactor">
    <cofactor evidence="1">
        <name>Zn(2+)</name>
        <dbReference type="ChEBI" id="CHEBI:29105"/>
    </cofactor>
    <cofactor evidence="1">
        <name>Mn(2+)</name>
        <dbReference type="ChEBI" id="CHEBI:29035"/>
    </cofactor>
    <text evidence="1">Binds 2 Zn(2+) and 1 Mn(2+) ions.</text>
</comment>
<comment type="subcellular location">
    <subcellularLocation>
        <location evidence="5">Mitochondrion</location>
    </subcellularLocation>
</comment>
<comment type="developmental stage">
    <text evidence="5">Highly expressed in oocysts and schizonts (PubMed:33711786). Expression is low during the blood asexual stage and in mosquito salivary gland sporozoites (PubMed:33711786). Expression is low at the host liver stage; however, expression increases at the late stage (PubMed:33711786).</text>
</comment>
<comment type="PTM">
    <text evidence="1">May be proteolytically cleaved.</text>
</comment>
<comment type="disruption phenotype">
    <text evidence="5">Normal asexual blood stage development (PubMed:33711786). Normal transmission from the host blood to the mosquito vector with no defect in oocyst development (PubMed:33711786). Salivary gland sporozoites are normal and are able to infect C57BL/6 mice (PubMed:33711786). Sporozoites can infect host liver and develop into merozoites (PubMed:33711786). No defect in the integrity of mitochondrial DNA (PubMed:33711786).</text>
</comment>
<comment type="similarity">
    <text evidence="7">Belongs to the AP endonuclease 2 family.</text>
</comment>
<reference evidence="9" key="1">
    <citation type="journal article" date="2014" name="BMC Biol.">
        <title>A comprehensive evaluation of rodent malaria parasite genomes and gene expression.</title>
        <authorList>
            <person name="Otto T.D."/>
            <person name="Bohme U."/>
            <person name="Jackson A.P."/>
            <person name="Hunt M."/>
            <person name="Franke-Fayard B."/>
            <person name="Hoeijmakers W.A."/>
            <person name="Religa A.A."/>
            <person name="Robertson L."/>
            <person name="Sanders M."/>
            <person name="Ogun S.A."/>
            <person name="Cunningham D."/>
            <person name="Erhart A."/>
            <person name="Billker O."/>
            <person name="Khan S.M."/>
            <person name="Stunnenberg H.G."/>
            <person name="Langhorne J."/>
            <person name="Holder A.A."/>
            <person name="Waters A.P."/>
            <person name="Newbold C.I."/>
            <person name="Pain A."/>
            <person name="Berriman M."/>
            <person name="Janse C.J."/>
        </authorList>
    </citation>
    <scope>NUCLEOTIDE SEQUENCE [LARGE SCALE GENOMIC DNA]</scope>
    <source>
        <strain evidence="9">ANKA</strain>
    </source>
</reference>
<reference evidence="7" key="2">
    <citation type="journal article" date="2021" name="DNA Repair">
        <title>Mitochondrial apurinic/apyrimidinic endonuclease Apn1 is not critical for the completion of the Plasmodium berghei life cycle.</title>
        <authorList>
            <person name="Srivastava P.N."/>
            <person name="Narwal S.K."/>
            <person name="Mishra S."/>
        </authorList>
    </citation>
    <scope>SUBCELLULAR LOCATION</scope>
    <scope>DEVELOPMENTAL STAGE</scope>
    <scope>DISRUPTION PHENOTYPE</scope>
</reference>
<accession>A0A509ASK2</accession>
<keyword id="KW-0227">DNA damage</keyword>
<keyword id="KW-0234">DNA repair</keyword>
<keyword id="KW-0255">Endonuclease</keyword>
<keyword id="KW-0378">Hydrolase</keyword>
<keyword id="KW-0464">Manganese</keyword>
<keyword id="KW-0479">Metal-binding</keyword>
<keyword id="KW-0496">Mitochondrion</keyword>
<keyword id="KW-0540">Nuclease</keyword>
<keyword id="KW-1185">Reference proteome</keyword>
<keyword id="KW-0732">Signal</keyword>
<keyword id="KW-0862">Zinc</keyword>
<name>APN1_PLABA</name>
<protein>
    <recommendedName>
        <fullName evidence="6">Apurinic-apyrimidinic endonuclease 1</fullName>
        <shortName evidence="6">PbApn1</shortName>
        <ecNumber evidence="1">3.1.21.-</ecNumber>
    </recommendedName>
</protein>
<dbReference type="EC" id="3.1.21.-" evidence="1"/>
<dbReference type="EMBL" id="LK023128">
    <property type="protein sequence ID" value="VUC57861.1"/>
    <property type="molecule type" value="Genomic_DNA"/>
</dbReference>
<dbReference type="SMR" id="A0A509ASK2"/>
<dbReference type="FunCoup" id="A0A509ASK2">
    <property type="interactions" value="18"/>
</dbReference>
<dbReference type="STRING" id="5823.A0A509ASK2"/>
<dbReference type="VEuPathDB" id="PlasmoDB:PBANKA_1347400"/>
<dbReference type="InParanoid" id="A0A509ASK2"/>
<dbReference type="OMA" id="NYINIRN"/>
<dbReference type="Proteomes" id="UP000074855">
    <property type="component" value="Chromosome 13"/>
</dbReference>
<dbReference type="GO" id="GO:0005739">
    <property type="term" value="C:mitochondrion"/>
    <property type="evidence" value="ECO:0000314"/>
    <property type="project" value="UniProtKB"/>
</dbReference>
<dbReference type="GO" id="GO:0005634">
    <property type="term" value="C:nucleus"/>
    <property type="evidence" value="ECO:0007669"/>
    <property type="project" value="TreeGrafter"/>
</dbReference>
<dbReference type="GO" id="GO:0003677">
    <property type="term" value="F:DNA binding"/>
    <property type="evidence" value="ECO:0007669"/>
    <property type="project" value="InterPro"/>
</dbReference>
<dbReference type="GO" id="GO:0003906">
    <property type="term" value="F:DNA-(apurinic or apyrimidinic site) endonuclease activity"/>
    <property type="evidence" value="ECO:0007669"/>
    <property type="project" value="TreeGrafter"/>
</dbReference>
<dbReference type="GO" id="GO:0004519">
    <property type="term" value="F:endonuclease activity"/>
    <property type="evidence" value="ECO:0007669"/>
    <property type="project" value="UniProtKB-KW"/>
</dbReference>
<dbReference type="GO" id="GO:0008081">
    <property type="term" value="F:phosphoric diester hydrolase activity"/>
    <property type="evidence" value="ECO:0007669"/>
    <property type="project" value="TreeGrafter"/>
</dbReference>
<dbReference type="GO" id="GO:0008270">
    <property type="term" value="F:zinc ion binding"/>
    <property type="evidence" value="ECO:0007669"/>
    <property type="project" value="InterPro"/>
</dbReference>
<dbReference type="GO" id="GO:0006284">
    <property type="term" value="P:base-excision repair"/>
    <property type="evidence" value="ECO:0007669"/>
    <property type="project" value="TreeGrafter"/>
</dbReference>
<dbReference type="CDD" id="cd00019">
    <property type="entry name" value="AP2Ec"/>
    <property type="match status" value="1"/>
</dbReference>
<dbReference type="FunFam" id="3.20.20.150:FF:000001">
    <property type="entry name" value="Probable endonuclease 4"/>
    <property type="match status" value="1"/>
</dbReference>
<dbReference type="Gene3D" id="3.20.20.150">
    <property type="entry name" value="Divalent-metal-dependent TIM barrel enzymes"/>
    <property type="match status" value="1"/>
</dbReference>
<dbReference type="HAMAP" id="MF_00152">
    <property type="entry name" value="Nfo"/>
    <property type="match status" value="1"/>
</dbReference>
<dbReference type="InterPro" id="IPR001719">
    <property type="entry name" value="AP_endonuc_2"/>
</dbReference>
<dbReference type="InterPro" id="IPR018246">
    <property type="entry name" value="AP_endonuc_F2_Zn_BS"/>
</dbReference>
<dbReference type="InterPro" id="IPR036237">
    <property type="entry name" value="Xyl_isomerase-like_sf"/>
</dbReference>
<dbReference type="InterPro" id="IPR013022">
    <property type="entry name" value="Xyl_isomerase-like_TIM-brl"/>
</dbReference>
<dbReference type="NCBIfam" id="TIGR00587">
    <property type="entry name" value="nfo"/>
    <property type="match status" value="1"/>
</dbReference>
<dbReference type="NCBIfam" id="NF002199">
    <property type="entry name" value="PRK01060.1-4"/>
    <property type="match status" value="1"/>
</dbReference>
<dbReference type="PANTHER" id="PTHR21445:SF0">
    <property type="entry name" value="APURINIC-APYRIMIDINIC ENDONUCLEASE"/>
    <property type="match status" value="1"/>
</dbReference>
<dbReference type="PANTHER" id="PTHR21445">
    <property type="entry name" value="ENDONUCLEASE IV ENDODEOXYRIBONUCLEASE IV"/>
    <property type="match status" value="1"/>
</dbReference>
<dbReference type="Pfam" id="PF01261">
    <property type="entry name" value="AP_endonuc_2"/>
    <property type="match status" value="1"/>
</dbReference>
<dbReference type="SMART" id="SM00518">
    <property type="entry name" value="AP2Ec"/>
    <property type="match status" value="1"/>
</dbReference>
<dbReference type="SUPFAM" id="SSF51658">
    <property type="entry name" value="Xylose isomerase-like"/>
    <property type="match status" value="1"/>
</dbReference>
<dbReference type="PROSITE" id="PS00729">
    <property type="entry name" value="AP_NUCLEASE_F2_1"/>
    <property type="match status" value="1"/>
</dbReference>
<dbReference type="PROSITE" id="PS00730">
    <property type="entry name" value="AP_NUCLEASE_F2_2"/>
    <property type="match status" value="1"/>
</dbReference>
<dbReference type="PROSITE" id="PS00731">
    <property type="entry name" value="AP_NUCLEASE_F2_3"/>
    <property type="match status" value="1"/>
</dbReference>
<dbReference type="PROSITE" id="PS51432">
    <property type="entry name" value="AP_NUCLEASE_F2_4"/>
    <property type="match status" value="1"/>
</dbReference>